<sequence>MEYFNVGKIVNTQGLQGEMRVLSVSDFAEERFKKGSQLALFDDKDRFVQEVTIVSHRKQKHFDIIKFKDMYHINAIEKYKGYTLKVSKDNQGDLQEGEFYYHQIIGMAVYEKDVLIGHVKEILQPGANDVWIVKRQGKRDLLLPYIPPVVLNVDVPNKRVDVELMEGLDDED</sequence>
<protein>
    <recommendedName>
        <fullName evidence="1">Ribosome maturation factor RimM</fullName>
    </recommendedName>
</protein>
<keyword id="KW-0143">Chaperone</keyword>
<keyword id="KW-0963">Cytoplasm</keyword>
<keyword id="KW-1185">Reference proteome</keyword>
<keyword id="KW-0690">Ribosome biogenesis</keyword>
<keyword id="KW-0698">rRNA processing</keyword>
<gene>
    <name evidence="1" type="primary">rimM</name>
    <name type="ordered locus">SPy_0847</name>
    <name type="ordered locus">M5005_Spy0655</name>
</gene>
<reference key="1">
    <citation type="journal article" date="2001" name="Proc. Natl. Acad. Sci. U.S.A.">
        <title>Complete genome sequence of an M1 strain of Streptococcus pyogenes.</title>
        <authorList>
            <person name="Ferretti J.J."/>
            <person name="McShan W.M."/>
            <person name="Ajdic D.J."/>
            <person name="Savic D.J."/>
            <person name="Savic G."/>
            <person name="Lyon K."/>
            <person name="Primeaux C."/>
            <person name="Sezate S."/>
            <person name="Suvorov A.N."/>
            <person name="Kenton S."/>
            <person name="Lai H.S."/>
            <person name="Lin S.P."/>
            <person name="Qian Y."/>
            <person name="Jia H.G."/>
            <person name="Najar F.Z."/>
            <person name="Ren Q."/>
            <person name="Zhu H."/>
            <person name="Song L."/>
            <person name="White J."/>
            <person name="Yuan X."/>
            <person name="Clifton S.W."/>
            <person name="Roe B.A."/>
            <person name="McLaughlin R.E."/>
        </authorList>
    </citation>
    <scope>NUCLEOTIDE SEQUENCE [LARGE SCALE GENOMIC DNA]</scope>
    <source>
        <strain>ATCC 700294 / SF370 / Serotype M1</strain>
    </source>
</reference>
<reference key="2">
    <citation type="journal article" date="2005" name="J. Infect. Dis.">
        <title>Evolutionary origin and emergence of a highly successful clone of serotype M1 group A Streptococcus involved multiple horizontal gene transfer events.</title>
        <authorList>
            <person name="Sumby P."/>
            <person name="Porcella S.F."/>
            <person name="Madrigal A.G."/>
            <person name="Barbian K.D."/>
            <person name="Virtaneva K."/>
            <person name="Ricklefs S.M."/>
            <person name="Sturdevant D.E."/>
            <person name="Graham M.R."/>
            <person name="Vuopio-Varkila J."/>
            <person name="Hoe N.P."/>
            <person name="Musser J.M."/>
        </authorList>
    </citation>
    <scope>NUCLEOTIDE SEQUENCE [LARGE SCALE GENOMIC DNA]</scope>
    <source>
        <strain>ATCC BAA-947 / MGAS5005 / Serotype M1</strain>
    </source>
</reference>
<proteinExistence type="inferred from homology"/>
<comment type="function">
    <text evidence="1">An accessory protein needed during the final step in the assembly of 30S ribosomal subunit, possibly for assembly of the head region. Essential for efficient processing of 16S rRNA. May be needed both before and after RbfA during the maturation of 16S rRNA. It has affinity for free ribosomal 30S subunits but not for 70S ribosomes.</text>
</comment>
<comment type="subunit">
    <text evidence="1">Binds ribosomal protein uS19.</text>
</comment>
<comment type="subcellular location">
    <subcellularLocation>
        <location evidence="1">Cytoplasm</location>
    </subcellularLocation>
</comment>
<comment type="domain">
    <text evidence="1">The PRC barrel domain binds ribosomal protein uS19.</text>
</comment>
<comment type="similarity">
    <text evidence="1">Belongs to the RimM family.</text>
</comment>
<name>RIMM_STRP1</name>
<dbReference type="EMBL" id="AE004092">
    <property type="protein sequence ID" value="AAK33776.1"/>
    <property type="molecule type" value="Genomic_DNA"/>
</dbReference>
<dbReference type="EMBL" id="CP000017">
    <property type="protein sequence ID" value="AAZ51273.1"/>
    <property type="molecule type" value="Genomic_DNA"/>
</dbReference>
<dbReference type="RefSeq" id="NP_269055.1">
    <property type="nucleotide sequence ID" value="NC_002737.2"/>
</dbReference>
<dbReference type="SMR" id="P58183"/>
<dbReference type="PaxDb" id="1314-HKU360_00668"/>
<dbReference type="KEGG" id="spy:SPy_0847"/>
<dbReference type="KEGG" id="spz:M5005_Spy0655"/>
<dbReference type="PATRIC" id="fig|160490.10.peg.725"/>
<dbReference type="HOGENOM" id="CLU_077636_3_1_9"/>
<dbReference type="OMA" id="IKVDWDP"/>
<dbReference type="Proteomes" id="UP000000750">
    <property type="component" value="Chromosome"/>
</dbReference>
<dbReference type="GO" id="GO:0005737">
    <property type="term" value="C:cytoplasm"/>
    <property type="evidence" value="ECO:0007669"/>
    <property type="project" value="UniProtKB-SubCell"/>
</dbReference>
<dbReference type="GO" id="GO:0005840">
    <property type="term" value="C:ribosome"/>
    <property type="evidence" value="ECO:0007669"/>
    <property type="project" value="InterPro"/>
</dbReference>
<dbReference type="GO" id="GO:0043022">
    <property type="term" value="F:ribosome binding"/>
    <property type="evidence" value="ECO:0007669"/>
    <property type="project" value="InterPro"/>
</dbReference>
<dbReference type="GO" id="GO:0042274">
    <property type="term" value="P:ribosomal small subunit biogenesis"/>
    <property type="evidence" value="ECO:0007669"/>
    <property type="project" value="UniProtKB-UniRule"/>
</dbReference>
<dbReference type="GO" id="GO:0006364">
    <property type="term" value="P:rRNA processing"/>
    <property type="evidence" value="ECO:0007669"/>
    <property type="project" value="UniProtKB-UniRule"/>
</dbReference>
<dbReference type="Gene3D" id="2.30.30.240">
    <property type="entry name" value="PRC-barrel domain"/>
    <property type="match status" value="1"/>
</dbReference>
<dbReference type="Gene3D" id="2.40.30.60">
    <property type="entry name" value="RimM"/>
    <property type="match status" value="1"/>
</dbReference>
<dbReference type="HAMAP" id="MF_00014">
    <property type="entry name" value="Ribosome_mat_RimM"/>
    <property type="match status" value="1"/>
</dbReference>
<dbReference type="InterPro" id="IPR027275">
    <property type="entry name" value="PRC-brl_dom"/>
</dbReference>
<dbReference type="InterPro" id="IPR011033">
    <property type="entry name" value="PRC_barrel-like_sf"/>
</dbReference>
<dbReference type="InterPro" id="IPR011961">
    <property type="entry name" value="RimM"/>
</dbReference>
<dbReference type="InterPro" id="IPR002676">
    <property type="entry name" value="RimM_N"/>
</dbReference>
<dbReference type="InterPro" id="IPR036976">
    <property type="entry name" value="RimM_N_sf"/>
</dbReference>
<dbReference type="InterPro" id="IPR009000">
    <property type="entry name" value="Transl_B-barrel_sf"/>
</dbReference>
<dbReference type="NCBIfam" id="TIGR02273">
    <property type="entry name" value="16S_RimM"/>
    <property type="match status" value="1"/>
</dbReference>
<dbReference type="PANTHER" id="PTHR33692">
    <property type="entry name" value="RIBOSOME MATURATION FACTOR RIMM"/>
    <property type="match status" value="1"/>
</dbReference>
<dbReference type="PANTHER" id="PTHR33692:SF1">
    <property type="entry name" value="RIBOSOME MATURATION FACTOR RIMM"/>
    <property type="match status" value="1"/>
</dbReference>
<dbReference type="Pfam" id="PF05239">
    <property type="entry name" value="PRC"/>
    <property type="match status" value="1"/>
</dbReference>
<dbReference type="Pfam" id="PF01782">
    <property type="entry name" value="RimM"/>
    <property type="match status" value="1"/>
</dbReference>
<dbReference type="SUPFAM" id="SSF50346">
    <property type="entry name" value="PRC-barrel domain"/>
    <property type="match status" value="1"/>
</dbReference>
<dbReference type="SUPFAM" id="SSF50447">
    <property type="entry name" value="Translation proteins"/>
    <property type="match status" value="1"/>
</dbReference>
<feature type="chain" id="PRO_0000163367" description="Ribosome maturation factor RimM">
    <location>
        <begin position="1"/>
        <end position="172"/>
    </location>
</feature>
<feature type="domain" description="PRC barrel" evidence="1">
    <location>
        <begin position="96"/>
        <end position="168"/>
    </location>
</feature>
<evidence type="ECO:0000255" key="1">
    <source>
        <dbReference type="HAMAP-Rule" id="MF_00014"/>
    </source>
</evidence>
<organism>
    <name type="scientific">Streptococcus pyogenes serotype M1</name>
    <dbReference type="NCBI Taxonomy" id="301447"/>
    <lineage>
        <taxon>Bacteria</taxon>
        <taxon>Bacillati</taxon>
        <taxon>Bacillota</taxon>
        <taxon>Bacilli</taxon>
        <taxon>Lactobacillales</taxon>
        <taxon>Streptococcaceae</taxon>
        <taxon>Streptococcus</taxon>
    </lineage>
</organism>
<accession>P58183</accession>
<accession>Q48ZE5</accession>